<reference key="1">
    <citation type="journal article" date="2006" name="Gene Expr. Patterns">
        <title>Cloning and developmental expression of WSTF during Xenopus laevis embryogenesis.</title>
        <authorList>
            <person name="Cus R."/>
            <person name="Maurus D."/>
            <person name="Kuehl M."/>
        </authorList>
    </citation>
    <scope>NUCLEOTIDE SEQUENCE [MRNA]</scope>
    <scope>TISSUE SPECIFICITY</scope>
    <scope>DEVELOPMENTAL STAGE</scope>
</reference>
<reference key="2">
    <citation type="submission" date="2004-06" db="EMBL/GenBank/DDBJ databases">
        <authorList>
            <consortium name="NIH - Xenopus Gene Collection (XGC) project"/>
        </authorList>
    </citation>
    <scope>NUCLEOTIDE SEQUENCE [LARGE SCALE MRNA] OF 1-774</scope>
    <source>
        <tissue>Embryo</tissue>
        <tissue>Oocyte</tissue>
    </source>
</reference>
<name>BAZ1B_XENLA</name>
<proteinExistence type="evidence at transcript level"/>
<feature type="chain" id="PRO_0000378189" description="Tyrosine-protein kinase BAZ1B">
    <location>
        <begin position="1"/>
        <end position="1441"/>
    </location>
</feature>
<feature type="domain" description="WAC" evidence="7">
    <location>
        <begin position="26"/>
        <end position="132"/>
    </location>
</feature>
<feature type="domain" description="DDT" evidence="5">
    <location>
        <begin position="578"/>
        <end position="642"/>
    </location>
</feature>
<feature type="domain" description="Bromo" evidence="4">
    <location>
        <begin position="1304"/>
        <end position="1408"/>
    </location>
</feature>
<feature type="zinc finger region" description="PHD-type" evidence="6">
    <location>
        <begin position="1151"/>
        <end position="1201"/>
    </location>
</feature>
<feature type="region of interest" description="Disordered" evidence="8">
    <location>
        <begin position="147"/>
        <end position="212"/>
    </location>
</feature>
<feature type="region of interest" description="Disordered" evidence="8">
    <location>
        <begin position="307"/>
        <end position="338"/>
    </location>
</feature>
<feature type="region of interest" description="Disordered" evidence="8">
    <location>
        <begin position="364"/>
        <end position="445"/>
    </location>
</feature>
<feature type="region of interest" description="Disordered" evidence="8">
    <location>
        <begin position="531"/>
        <end position="555"/>
    </location>
</feature>
<feature type="region of interest" description="Disordered" evidence="8">
    <location>
        <begin position="675"/>
        <end position="696"/>
    </location>
</feature>
<feature type="region of interest" description="Disordered" evidence="8">
    <location>
        <begin position="766"/>
        <end position="785"/>
    </location>
</feature>
<feature type="region of interest" description="Disordered" evidence="8">
    <location>
        <begin position="823"/>
        <end position="858"/>
    </location>
</feature>
<feature type="region of interest" description="Disordered" evidence="8">
    <location>
        <begin position="911"/>
        <end position="949"/>
    </location>
</feature>
<feature type="region of interest" description="Disordered" evidence="8">
    <location>
        <begin position="1204"/>
        <end position="1308"/>
    </location>
</feature>
<feature type="region of interest" description="Disordered" evidence="8">
    <location>
        <begin position="1408"/>
        <end position="1441"/>
    </location>
</feature>
<feature type="coiled-coil region" evidence="3">
    <location>
        <begin position="513"/>
        <end position="558"/>
    </location>
</feature>
<feature type="coiled-coil region" evidence="3">
    <location>
        <begin position="813"/>
        <end position="861"/>
    </location>
</feature>
<feature type="coiled-coil region" evidence="3">
    <location>
        <begin position="1080"/>
        <end position="1113"/>
    </location>
</feature>
<feature type="coiled-coil region" evidence="3">
    <location>
        <begin position="1213"/>
        <end position="1253"/>
    </location>
</feature>
<feature type="compositionally biased region" description="Basic and acidic residues" evidence="8">
    <location>
        <begin position="147"/>
        <end position="171"/>
    </location>
</feature>
<feature type="compositionally biased region" description="Polar residues" evidence="8">
    <location>
        <begin position="386"/>
        <end position="397"/>
    </location>
</feature>
<feature type="compositionally biased region" description="Basic residues" evidence="8">
    <location>
        <begin position="398"/>
        <end position="408"/>
    </location>
</feature>
<feature type="compositionally biased region" description="Polar residues" evidence="8">
    <location>
        <begin position="430"/>
        <end position="441"/>
    </location>
</feature>
<feature type="compositionally biased region" description="Acidic residues" evidence="8">
    <location>
        <begin position="686"/>
        <end position="696"/>
    </location>
</feature>
<feature type="compositionally biased region" description="Basic and acidic residues" evidence="8">
    <location>
        <begin position="776"/>
        <end position="785"/>
    </location>
</feature>
<feature type="compositionally biased region" description="Basic and acidic residues" evidence="8">
    <location>
        <begin position="824"/>
        <end position="858"/>
    </location>
</feature>
<feature type="compositionally biased region" description="Basic and acidic residues" evidence="8">
    <location>
        <begin position="937"/>
        <end position="946"/>
    </location>
</feature>
<feature type="compositionally biased region" description="Acidic residues" evidence="8">
    <location>
        <begin position="1216"/>
        <end position="1245"/>
    </location>
</feature>
<feature type="compositionally biased region" description="Basic residues" evidence="8">
    <location>
        <begin position="1251"/>
        <end position="1270"/>
    </location>
</feature>
<feature type="compositionally biased region" description="Polar residues" evidence="8">
    <location>
        <begin position="1299"/>
        <end position="1308"/>
    </location>
</feature>
<feature type="sequence conflict" description="In Ref. 2; AAI26048." evidence="10" ref="2">
    <original>A</original>
    <variation>P</variation>
    <location>
        <position position="275"/>
    </location>
</feature>
<feature type="sequence conflict" description="In Ref. 1; CAJ29032." evidence="10" ref="1">
    <original>G</original>
    <variation>E</variation>
    <location>
        <position position="763"/>
    </location>
</feature>
<feature type="sequence conflict" description="In Ref. 1; CAJ29032." evidence="10" ref="1">
    <original>A</original>
    <variation>E</variation>
    <location>
        <position position="771"/>
    </location>
</feature>
<evidence type="ECO:0000250" key="1"/>
<evidence type="ECO:0000250" key="2">
    <source>
        <dbReference type="UniProtKB" id="Q9UIG0"/>
    </source>
</evidence>
<evidence type="ECO:0000255" key="3"/>
<evidence type="ECO:0000255" key="4">
    <source>
        <dbReference type="PROSITE-ProRule" id="PRU00035"/>
    </source>
</evidence>
<evidence type="ECO:0000255" key="5">
    <source>
        <dbReference type="PROSITE-ProRule" id="PRU00063"/>
    </source>
</evidence>
<evidence type="ECO:0000255" key="6">
    <source>
        <dbReference type="PROSITE-ProRule" id="PRU00146"/>
    </source>
</evidence>
<evidence type="ECO:0000255" key="7">
    <source>
        <dbReference type="PROSITE-ProRule" id="PRU00475"/>
    </source>
</evidence>
<evidence type="ECO:0000256" key="8">
    <source>
        <dbReference type="SAM" id="MobiDB-lite"/>
    </source>
</evidence>
<evidence type="ECO:0000269" key="9">
    <source>
    </source>
</evidence>
<evidence type="ECO:0000305" key="10"/>
<organism>
    <name type="scientific">Xenopus laevis</name>
    <name type="common">African clawed frog</name>
    <dbReference type="NCBI Taxonomy" id="8355"/>
    <lineage>
        <taxon>Eukaryota</taxon>
        <taxon>Metazoa</taxon>
        <taxon>Chordata</taxon>
        <taxon>Craniata</taxon>
        <taxon>Vertebrata</taxon>
        <taxon>Euteleostomi</taxon>
        <taxon>Amphibia</taxon>
        <taxon>Batrachia</taxon>
        <taxon>Anura</taxon>
        <taxon>Pipoidea</taxon>
        <taxon>Pipidae</taxon>
        <taxon>Xenopodinae</taxon>
        <taxon>Xenopus</taxon>
        <taxon>Xenopus</taxon>
    </lineage>
</organism>
<sequence length="1441" mass="166153">MAPLLGRRPFPLVKPLSEAATGEGEEEVYMIEHSKEAFRSREEYESRLERYAERIWTCKSTGSSQLTHKEAWDEEQEVAELLKEEFPVWYEKQVLEMVHHNTISLDKLVDQSWMEIMTKYADGEECDFEVGPEKYLRAKIVKVHPLEKEEQASEKKSEGSCDSPSSDKENSNKVAQDIQLKEESNRLESLSSLRESDRARRSPRKLPTSLKKEEKKWVPPKFLPHKYDVKLLNEDKVISFVPVDSLYRSERPPNKEILRYFIRHNALRIGTGENAPWVVEDELVKKYTLPSKFSDFLLDPHKYMTLNPSSATKRKSLGSPDQKPAKKSKKSPLSPSSWSLANLKKTAVNSSSSEEEMQLMIGANLNKKGSIGKKSDKKKPKNGKSQVLNGQKISAKTRSPKKGLKSPKLKQMTLLDMAKSTPKVSRAQKGGSNTPRSSSKPNKYLPPAALHLISYYRDNKNREDRKSALSALISKVARMLSAEDRKRLPDDLQELVQKRYELLEHRKQWAVMTEEQREEYMRKKREALKARIKEKTRERKQKEREERLEKQKRYEDQDLTGKSLPTFKLVDTPEGLPNALFGDVAMVIEFLSGYSDLLLPDGQYPVTAVSLMEALAAEKGGFMYLNRGLVVLLQTLLQDEIAEDYGELGMKLSEIPLTLHSASELVRLCLRKSDSPAGENESIEKGDEDSEGSAVYQDDEVEDEYLEKLETSEFFELTTEEKLHILAALCHRILMTYSVQDHVDAKQQRSGELWKERLAILKGENDKKRAAKQKRKEQGTVKPKEEVQAAKIVKKQEKINTQQDNDAEDMISAVKSRRLQAMQAKKEKEEHEKLTKERIERETEEERSRKQKASAEKAFHEGIAKAKLVLRRSPLGTDRNHNRYWLFSDEVPGLYIEKGWVHDSINYRFSPESKQDSEQDAEESEDANSSIGCPDDSTQREEKHAETTVPKQGQNLWFLCDTQKELDELLDSLHPQGFRESQLKERLQNRYQDIMHSIHLARKQNLGLKTCDGQQELLNFLRSDIIEVATRLQKGGLGYLDDTTEFEAKVRTFENLKDFGECIVFLQAAVIKKFLQGFMAPKQKKRKHQSEEAAAKAEEQDEEKKMAEEAKVASAVEKWKVAIRDAQTFSRMHVLLGMLDACIKWDMSSENARCKVCRKKGEDDKLILCDECNKAFHLFCLRPVLFNIPDGEWLCPACQPATARRSSRGRNYAEDSTQDEDEEEEEEESEEEEEEESDEEEEEQEMMGQRLRSRKAAKGKPGRPTRRGRPPKNNTHSRVSRQRYVEDTEADVEEMVRQSKPTSRRQNQEFQKCEEILAKLIKYRFSWPFREPFNADEIEDYTKVVTTPMDFQTMQSKCSCGSYQTVQEFLNDLKLVFGNTELYYEAGSSQLSCLEKTEQCARDLLGKHLPAHTYQRRHRKHQSPEPEPETANPGRGRKQKK</sequence>
<keyword id="KW-0067">ATP-binding</keyword>
<keyword id="KW-0103">Bromodomain</keyword>
<keyword id="KW-0175">Coiled coil</keyword>
<keyword id="KW-0227">DNA damage</keyword>
<keyword id="KW-0418">Kinase</keyword>
<keyword id="KW-0479">Metal-binding</keyword>
<keyword id="KW-0547">Nucleotide-binding</keyword>
<keyword id="KW-0539">Nucleus</keyword>
<keyword id="KW-1185">Reference proteome</keyword>
<keyword id="KW-0804">Transcription</keyword>
<keyword id="KW-0805">Transcription regulation</keyword>
<keyword id="KW-0808">Transferase</keyword>
<keyword id="KW-0829">Tyrosine-protein kinase</keyword>
<keyword id="KW-0862">Zinc</keyword>
<keyword id="KW-0863">Zinc-finger</keyword>
<comment type="function">
    <text evidence="1">Atypical tyrosine-protein kinase that plays a central role in chromatin remodeling and acts as a transcription regulator. Involved in DNA damage response by phosphorylating 'Tyr-142' of histone H2AX (H2AXY142ph). H2AXY142ph plays a central role in DNA repair and acts as a mark that distinguishes between apoptotic and repair responses to genotoxic stress. Essential component of the WICH complex, a chromatin remodeling complex that mobilizes nucleosomes and reconfigures irregular chromatin to a regular nucleosomal array structure. The WICH complex regulates the transcription of various genes, has a role in RNA polymerase I and RNA polymerase III transcription, mediates the histone H2AX phosphorylation at 'Tyr-142', and is involved in the maintenance of chromatin structures during DNA replication processes.</text>
</comment>
<comment type="catalytic activity">
    <reaction>
        <text>L-tyrosyl-[protein] + ATP = O-phospho-L-tyrosyl-[protein] + ADP + H(+)</text>
        <dbReference type="Rhea" id="RHEA:10596"/>
        <dbReference type="Rhea" id="RHEA-COMP:10136"/>
        <dbReference type="Rhea" id="RHEA-COMP:20101"/>
        <dbReference type="ChEBI" id="CHEBI:15378"/>
        <dbReference type="ChEBI" id="CHEBI:30616"/>
        <dbReference type="ChEBI" id="CHEBI:46858"/>
        <dbReference type="ChEBI" id="CHEBI:61978"/>
        <dbReference type="ChEBI" id="CHEBI:456216"/>
        <dbReference type="EC" id="2.7.10.2"/>
    </reaction>
</comment>
<comment type="cofactor">
    <cofactor evidence="1">
        <name>Mn(2+)</name>
        <dbReference type="ChEBI" id="CHEBI:29035"/>
    </cofactor>
</comment>
<comment type="subunit">
    <text evidence="1">Interacts with smarca5/snf2h; the interaction is direct and forms the WICH complex. Component of the B-WICH complex.</text>
</comment>
<comment type="subcellular location">
    <subcellularLocation>
        <location evidence="5 7">Nucleus</location>
    </subcellularLocation>
    <text evidence="2">Accumulates in pericentromeric heterochromatin during replication. Targeted to replication foci throughout S phase (By similarity). Localizes to sites of DNA damage (By similarity).</text>
</comment>
<comment type="tissue specificity">
    <text evidence="9">Highly expressed in the neural tube.</text>
</comment>
<comment type="developmental stage">
    <text evidence="9">Detected maternally in mature unfertilized oocytes and ubiquitously expressed until embryonic stage 16. In stage 17/18, expression becomes restricted to the closing neural tube.</text>
</comment>
<comment type="domain">
    <text evidence="1">The bromo domain mediates the specific interaction with acetylated histones.</text>
</comment>
<comment type="similarity">
    <text evidence="10">Belongs to the WAL family. BAZ1B subfamily.</text>
</comment>
<comment type="sequence caution" evidence="10">
    <conflict type="miscellaneous discrepancy">
        <sequence resource="EMBL-CDS" id="AAH72944"/>
    </conflict>
    <text>Contaminating sequence. Potential poly-A sequence.</text>
</comment>
<gene>
    <name type="primary">baz1b</name>
    <name type="synonym">wstf</name>
</gene>
<accession>A8DZJ1</accession>
<accession>A0JMY1</accession>
<accession>Q6GQ06</accession>
<dbReference type="EC" id="2.7.10.2"/>
<dbReference type="EMBL" id="AM084226">
    <property type="protein sequence ID" value="CAJ29032.1"/>
    <property type="molecule type" value="mRNA"/>
</dbReference>
<dbReference type="EMBL" id="BC072944">
    <property type="protein sequence ID" value="AAH72944.1"/>
    <property type="status" value="ALT_SEQ"/>
    <property type="molecule type" value="mRNA"/>
</dbReference>
<dbReference type="EMBL" id="BC126047">
    <property type="protein sequence ID" value="AAI26048.1"/>
    <property type="molecule type" value="mRNA"/>
</dbReference>
<dbReference type="RefSeq" id="NP_001136259.1">
    <property type="nucleotide sequence ID" value="NM_001142787.1"/>
</dbReference>
<dbReference type="SMR" id="A8DZJ1"/>
<dbReference type="BioGRID" id="101759">
    <property type="interactions" value="1"/>
</dbReference>
<dbReference type="IntAct" id="A8DZJ1">
    <property type="interactions" value="1"/>
</dbReference>
<dbReference type="AGR" id="Xenbase:XB-GENE-866493"/>
<dbReference type="Proteomes" id="UP000186698">
    <property type="component" value="Unplaced"/>
</dbReference>
<dbReference type="GO" id="GO:0005634">
    <property type="term" value="C:nucleus"/>
    <property type="evidence" value="ECO:0000250"/>
    <property type="project" value="UniProtKB"/>
</dbReference>
<dbReference type="GO" id="GO:0090535">
    <property type="term" value="C:WICH complex"/>
    <property type="evidence" value="ECO:0000318"/>
    <property type="project" value="GO_Central"/>
</dbReference>
<dbReference type="GO" id="GO:0005524">
    <property type="term" value="F:ATP binding"/>
    <property type="evidence" value="ECO:0007669"/>
    <property type="project" value="UniProtKB-KW"/>
</dbReference>
<dbReference type="GO" id="GO:0042393">
    <property type="term" value="F:histone binding"/>
    <property type="evidence" value="ECO:0000318"/>
    <property type="project" value="GO_Central"/>
</dbReference>
<dbReference type="GO" id="GO:0140801">
    <property type="term" value="F:histone H2AXY142 kinase activity"/>
    <property type="evidence" value="ECO:0000250"/>
    <property type="project" value="UniProtKB"/>
</dbReference>
<dbReference type="GO" id="GO:0035173">
    <property type="term" value="F:histone kinase activity"/>
    <property type="evidence" value="ECO:0000318"/>
    <property type="project" value="GO_Central"/>
</dbReference>
<dbReference type="GO" id="GO:0004715">
    <property type="term" value="F:non-membrane spanning protein tyrosine kinase activity"/>
    <property type="evidence" value="ECO:0007669"/>
    <property type="project" value="UniProtKB-EC"/>
</dbReference>
<dbReference type="GO" id="GO:0008270">
    <property type="term" value="F:zinc ion binding"/>
    <property type="evidence" value="ECO:0007669"/>
    <property type="project" value="UniProtKB-KW"/>
</dbReference>
<dbReference type="GO" id="GO:0006338">
    <property type="term" value="P:chromatin remodeling"/>
    <property type="evidence" value="ECO:0000318"/>
    <property type="project" value="GO_Central"/>
</dbReference>
<dbReference type="GO" id="GO:0006974">
    <property type="term" value="P:DNA damage response"/>
    <property type="evidence" value="ECO:0000250"/>
    <property type="project" value="UniProtKB"/>
</dbReference>
<dbReference type="GO" id="GO:0043687">
    <property type="term" value="P:post-translational protein modification"/>
    <property type="evidence" value="ECO:0000250"/>
    <property type="project" value="UniProtKB"/>
</dbReference>
<dbReference type="CDD" id="cd05505">
    <property type="entry name" value="Bromo_WSTF_like"/>
    <property type="match status" value="1"/>
</dbReference>
<dbReference type="CDD" id="cd15628">
    <property type="entry name" value="PHD_BAZ1B"/>
    <property type="match status" value="1"/>
</dbReference>
<dbReference type="FunFam" id="3.30.40.10:FF:000131">
    <property type="entry name" value="tyrosine-protein kinase BAZ1B isoform X1"/>
    <property type="match status" value="1"/>
</dbReference>
<dbReference type="Gene3D" id="1.20.920.10">
    <property type="entry name" value="Bromodomain-like"/>
    <property type="match status" value="1"/>
</dbReference>
<dbReference type="Gene3D" id="3.30.40.10">
    <property type="entry name" value="Zinc/RING finger domain, C3HC4 (zinc finger)"/>
    <property type="match status" value="1"/>
</dbReference>
<dbReference type="InterPro" id="IPR047174">
    <property type="entry name" value="BAZ1B"/>
</dbReference>
<dbReference type="InterPro" id="IPR037375">
    <property type="entry name" value="BAZ1B_Bromo"/>
</dbReference>
<dbReference type="InterPro" id="IPR047256">
    <property type="entry name" value="BAZ1B_PHD"/>
</dbReference>
<dbReference type="InterPro" id="IPR001487">
    <property type="entry name" value="Bromodomain"/>
</dbReference>
<dbReference type="InterPro" id="IPR036427">
    <property type="entry name" value="Bromodomain-like_sf"/>
</dbReference>
<dbReference type="InterPro" id="IPR018501">
    <property type="entry name" value="DDT_dom"/>
</dbReference>
<dbReference type="InterPro" id="IPR028942">
    <property type="entry name" value="WHIM1_dom"/>
</dbReference>
<dbReference type="InterPro" id="IPR028941">
    <property type="entry name" value="WHIM2_dom"/>
</dbReference>
<dbReference type="InterPro" id="IPR013136">
    <property type="entry name" value="WSTF_Acf1_Cbp146"/>
</dbReference>
<dbReference type="InterPro" id="IPR019786">
    <property type="entry name" value="Zinc_finger_PHD-type_CS"/>
</dbReference>
<dbReference type="InterPro" id="IPR011011">
    <property type="entry name" value="Znf_FYVE_PHD"/>
</dbReference>
<dbReference type="InterPro" id="IPR001965">
    <property type="entry name" value="Znf_PHD"/>
</dbReference>
<dbReference type="InterPro" id="IPR019787">
    <property type="entry name" value="Znf_PHD-finger"/>
</dbReference>
<dbReference type="InterPro" id="IPR001841">
    <property type="entry name" value="Znf_RING"/>
</dbReference>
<dbReference type="InterPro" id="IPR013083">
    <property type="entry name" value="Znf_RING/FYVE/PHD"/>
</dbReference>
<dbReference type="PANTHER" id="PTHR46802">
    <property type="entry name" value="TYROSINE-PROTEIN KINASE BAZ1B"/>
    <property type="match status" value="1"/>
</dbReference>
<dbReference type="PANTHER" id="PTHR46802:SF1">
    <property type="entry name" value="TYROSINE-PROTEIN KINASE BAZ1B"/>
    <property type="match status" value="1"/>
</dbReference>
<dbReference type="Pfam" id="PF00439">
    <property type="entry name" value="Bromodomain"/>
    <property type="match status" value="1"/>
</dbReference>
<dbReference type="Pfam" id="PF00628">
    <property type="entry name" value="PHD"/>
    <property type="match status" value="1"/>
</dbReference>
<dbReference type="Pfam" id="PF10537">
    <property type="entry name" value="WAC_Acf1_DNA_bd"/>
    <property type="match status" value="1"/>
</dbReference>
<dbReference type="Pfam" id="PF15612">
    <property type="entry name" value="WHIM1"/>
    <property type="match status" value="1"/>
</dbReference>
<dbReference type="Pfam" id="PF15613">
    <property type="entry name" value="WSD"/>
    <property type="match status" value="1"/>
</dbReference>
<dbReference type="PRINTS" id="PR00503">
    <property type="entry name" value="BROMODOMAIN"/>
</dbReference>
<dbReference type="SMART" id="SM00297">
    <property type="entry name" value="BROMO"/>
    <property type="match status" value="1"/>
</dbReference>
<dbReference type="SMART" id="SM00571">
    <property type="entry name" value="DDT"/>
    <property type="match status" value="1"/>
</dbReference>
<dbReference type="SMART" id="SM00249">
    <property type="entry name" value="PHD"/>
    <property type="match status" value="1"/>
</dbReference>
<dbReference type="SUPFAM" id="SSF47370">
    <property type="entry name" value="Bromodomain"/>
    <property type="match status" value="1"/>
</dbReference>
<dbReference type="SUPFAM" id="SSF57903">
    <property type="entry name" value="FYVE/PHD zinc finger"/>
    <property type="match status" value="1"/>
</dbReference>
<dbReference type="PROSITE" id="PS50014">
    <property type="entry name" value="BROMODOMAIN_2"/>
    <property type="match status" value="1"/>
</dbReference>
<dbReference type="PROSITE" id="PS50827">
    <property type="entry name" value="DDT"/>
    <property type="match status" value="1"/>
</dbReference>
<dbReference type="PROSITE" id="PS51136">
    <property type="entry name" value="WAC"/>
    <property type="match status" value="1"/>
</dbReference>
<dbReference type="PROSITE" id="PS01359">
    <property type="entry name" value="ZF_PHD_1"/>
    <property type="match status" value="1"/>
</dbReference>
<dbReference type="PROSITE" id="PS50016">
    <property type="entry name" value="ZF_PHD_2"/>
    <property type="match status" value="1"/>
</dbReference>
<protein>
    <recommendedName>
        <fullName>Tyrosine-protein kinase BAZ1B</fullName>
        <ecNumber>2.7.10.2</ecNumber>
    </recommendedName>
    <alternativeName>
        <fullName>Bromodomain adjacent to zinc finger domain protein 1B</fullName>
    </alternativeName>
    <alternativeName>
        <fullName>Williams syndrome transcription factor homolog</fullName>
    </alternativeName>
</protein>